<accession>A1KJP4</accession>
<reference key="1">
    <citation type="journal article" date="2007" name="Proc. Natl. Acad. Sci. U.S.A.">
        <title>Genome plasticity of BCG and impact on vaccine efficacy.</title>
        <authorList>
            <person name="Brosch R."/>
            <person name="Gordon S.V."/>
            <person name="Garnier T."/>
            <person name="Eiglmeier K."/>
            <person name="Frigui W."/>
            <person name="Valenti P."/>
            <person name="Dos Santos S."/>
            <person name="Duthoy S."/>
            <person name="Lacroix C."/>
            <person name="Garcia-Pelayo C."/>
            <person name="Inwald J.K."/>
            <person name="Golby P."/>
            <person name="Garcia J.N."/>
            <person name="Hewinson R.G."/>
            <person name="Behr M.A."/>
            <person name="Quail M.A."/>
            <person name="Churcher C."/>
            <person name="Barrell B.G."/>
            <person name="Parkhill J."/>
            <person name="Cole S.T."/>
        </authorList>
    </citation>
    <scope>NUCLEOTIDE SEQUENCE [LARGE SCALE GENOMIC DNA]</scope>
    <source>
        <strain>BCG / Pasteur 1173P2</strain>
    </source>
</reference>
<gene>
    <name evidence="1" type="primary">gcvP</name>
    <name type="ordered locus">BCG_1867</name>
</gene>
<protein>
    <recommendedName>
        <fullName evidence="1">Glycine dehydrogenase (decarboxylating)</fullName>
        <ecNumber evidence="1">1.4.4.2</ecNumber>
    </recommendedName>
    <alternativeName>
        <fullName evidence="1">Glycine cleavage system P-protein</fullName>
    </alternativeName>
    <alternativeName>
        <fullName evidence="1">Glycine decarboxylase</fullName>
    </alternativeName>
    <alternativeName>
        <fullName evidence="1">Glycine dehydrogenase (aminomethyl-transferring)</fullName>
    </alternativeName>
</protein>
<organism>
    <name type="scientific">Mycobacterium bovis (strain BCG / Pasteur 1173P2)</name>
    <dbReference type="NCBI Taxonomy" id="410289"/>
    <lineage>
        <taxon>Bacteria</taxon>
        <taxon>Bacillati</taxon>
        <taxon>Actinomycetota</taxon>
        <taxon>Actinomycetes</taxon>
        <taxon>Mycobacteriales</taxon>
        <taxon>Mycobacteriaceae</taxon>
        <taxon>Mycobacterium</taxon>
        <taxon>Mycobacterium tuberculosis complex</taxon>
    </lineage>
</organism>
<sequence>MSDHSTFADRHIGLDSQAVATMLAVIGVDSLDDLAVKAVPAGILDTLTDTGAAPGLDSLPPAASEAEALAELRALADANTVAVSMIGQGYYDTHTPPVLLRNIIENPAWYTAYTPYQPEISQGRLEALLNFQTLVTDLTGLEIANASMLDEGTAAAEAMTLMHRAARGPVKRVVVDADVFTQTAAVLATRAKPLGIEIVTADLRAGLPDGEFFGAIAQLPGASGRITDWSALVQQAHDRGALVAVGADLLALTLIAPPGEIGADVAFGTTQRFGVPMGFGGPHAGYLAVHAKHARQLPGRLVGVSVDSDGTPAYRLALQTREQHIRRDKATSNICTAQVLLAVLAAMYASYHGAGGLTAIARRVHAHAEAIAGALGDALVHDKYFDTVLARVPGRADEVLARAKANGINLWRVDADHVSVACDEATTDTHVAVVLDAFGVAAAAPAHADIATRTSEFLTHPAFTQYRTETSMMRYLRALADKDIALDRSMIPLGSCTMKLNAAAEMESITWPEFGRQHPFAPASDTAGLRQLVADLQSWLVLITGYDAVSLQPNAGSQGEYAGLLAIHEYHASRGEPHRDICLIPSSAHGTNAASAALAGMRVVVVDCHDNGDVDLDDLRAKVGEHAERLSALMITYPSTHGVYEHDIAEICAAVHDAGGQVYVDGANLNALVGLARPGKFGGDVSHLNLHKTFCIPHGGGGPGVGPVAVRAHLAPFLPGHPFAPELPKGYPVSSAPYGSASILPITWAYIRMMGAEGLRAASLTAITSANYIARRLDEYYPVLYTGENGMVAHECILDLRGITKLTGITVDDVAKRLADYGFHAPTMSFPVAGTLMVEPTESESLAEVDAFCEAMIGIRAEIDKVGAGEWPVDDNPLRGAPHTAQCLLASDWDHPYTREQAAYPLGTAFRPKVWPAVRRIDGAYGDRNLVCSCPPVEAFA</sequence>
<comment type="function">
    <text evidence="1">The glycine cleavage system catalyzes the degradation of glycine. The P protein binds the alpha-amino group of glycine through its pyridoxal phosphate cofactor; CO(2) is released and the remaining methylamine moiety is then transferred to the lipoamide cofactor of the H protein.</text>
</comment>
<comment type="catalytic activity">
    <reaction evidence="1">
        <text>N(6)-[(R)-lipoyl]-L-lysyl-[glycine-cleavage complex H protein] + glycine + H(+) = N(6)-[(R)-S(8)-aminomethyldihydrolipoyl]-L-lysyl-[glycine-cleavage complex H protein] + CO2</text>
        <dbReference type="Rhea" id="RHEA:24304"/>
        <dbReference type="Rhea" id="RHEA-COMP:10494"/>
        <dbReference type="Rhea" id="RHEA-COMP:10495"/>
        <dbReference type="ChEBI" id="CHEBI:15378"/>
        <dbReference type="ChEBI" id="CHEBI:16526"/>
        <dbReference type="ChEBI" id="CHEBI:57305"/>
        <dbReference type="ChEBI" id="CHEBI:83099"/>
        <dbReference type="ChEBI" id="CHEBI:83143"/>
        <dbReference type="EC" id="1.4.4.2"/>
    </reaction>
</comment>
<comment type="cofactor">
    <cofactor evidence="1">
        <name>pyridoxal 5'-phosphate</name>
        <dbReference type="ChEBI" id="CHEBI:597326"/>
    </cofactor>
</comment>
<comment type="subunit">
    <text evidence="1">The glycine cleavage system is composed of four proteins: P, T, L and H.</text>
</comment>
<comment type="similarity">
    <text evidence="1">Belongs to the GcvP family.</text>
</comment>
<keyword id="KW-0560">Oxidoreductase</keyword>
<keyword id="KW-0663">Pyridoxal phosphate</keyword>
<dbReference type="EC" id="1.4.4.2" evidence="1"/>
<dbReference type="EMBL" id="AM408590">
    <property type="protein sequence ID" value="CAL71854.1"/>
    <property type="molecule type" value="Genomic_DNA"/>
</dbReference>
<dbReference type="RefSeq" id="WP_010950613.1">
    <property type="nucleotide sequence ID" value="NC_008769.1"/>
</dbReference>
<dbReference type="SMR" id="A1KJP4"/>
<dbReference type="KEGG" id="mbb:BCG_1867"/>
<dbReference type="HOGENOM" id="CLU_004620_2_2_11"/>
<dbReference type="Proteomes" id="UP000001472">
    <property type="component" value="Chromosome"/>
</dbReference>
<dbReference type="GO" id="GO:0005829">
    <property type="term" value="C:cytosol"/>
    <property type="evidence" value="ECO:0007669"/>
    <property type="project" value="TreeGrafter"/>
</dbReference>
<dbReference type="GO" id="GO:0005960">
    <property type="term" value="C:glycine cleavage complex"/>
    <property type="evidence" value="ECO:0007669"/>
    <property type="project" value="TreeGrafter"/>
</dbReference>
<dbReference type="GO" id="GO:0016594">
    <property type="term" value="F:glycine binding"/>
    <property type="evidence" value="ECO:0007669"/>
    <property type="project" value="TreeGrafter"/>
</dbReference>
<dbReference type="GO" id="GO:0004375">
    <property type="term" value="F:glycine dehydrogenase (decarboxylating) activity"/>
    <property type="evidence" value="ECO:0007669"/>
    <property type="project" value="UniProtKB-EC"/>
</dbReference>
<dbReference type="GO" id="GO:0030170">
    <property type="term" value="F:pyridoxal phosphate binding"/>
    <property type="evidence" value="ECO:0007669"/>
    <property type="project" value="TreeGrafter"/>
</dbReference>
<dbReference type="GO" id="GO:0019464">
    <property type="term" value="P:glycine decarboxylation via glycine cleavage system"/>
    <property type="evidence" value="ECO:0007669"/>
    <property type="project" value="UniProtKB-UniRule"/>
</dbReference>
<dbReference type="CDD" id="cd00613">
    <property type="entry name" value="GDC-P"/>
    <property type="match status" value="2"/>
</dbReference>
<dbReference type="FunFam" id="3.90.1150.10:FF:000059">
    <property type="entry name" value="Glycine dehydrogenase (decarboxylating)"/>
    <property type="match status" value="1"/>
</dbReference>
<dbReference type="FunFam" id="3.40.640.10:FF:000005">
    <property type="entry name" value="Glycine dehydrogenase (decarboxylating), mitochondrial"/>
    <property type="match status" value="1"/>
</dbReference>
<dbReference type="FunFam" id="3.40.640.10:FF:000007">
    <property type="entry name" value="glycine dehydrogenase (Decarboxylating), mitochondrial"/>
    <property type="match status" value="1"/>
</dbReference>
<dbReference type="Gene3D" id="3.90.1150.10">
    <property type="entry name" value="Aspartate Aminotransferase, domain 1"/>
    <property type="match status" value="2"/>
</dbReference>
<dbReference type="Gene3D" id="3.40.640.10">
    <property type="entry name" value="Type I PLP-dependent aspartate aminotransferase-like (Major domain)"/>
    <property type="match status" value="2"/>
</dbReference>
<dbReference type="HAMAP" id="MF_00711">
    <property type="entry name" value="GcvP"/>
    <property type="match status" value="1"/>
</dbReference>
<dbReference type="InterPro" id="IPR003437">
    <property type="entry name" value="GcvP"/>
</dbReference>
<dbReference type="InterPro" id="IPR049316">
    <property type="entry name" value="GDC-P_C"/>
</dbReference>
<dbReference type="InterPro" id="IPR049315">
    <property type="entry name" value="GDC-P_N"/>
</dbReference>
<dbReference type="InterPro" id="IPR020581">
    <property type="entry name" value="GDC_P"/>
</dbReference>
<dbReference type="InterPro" id="IPR015424">
    <property type="entry name" value="PyrdxlP-dep_Trfase"/>
</dbReference>
<dbReference type="InterPro" id="IPR015421">
    <property type="entry name" value="PyrdxlP-dep_Trfase_major"/>
</dbReference>
<dbReference type="InterPro" id="IPR015422">
    <property type="entry name" value="PyrdxlP-dep_Trfase_small"/>
</dbReference>
<dbReference type="NCBIfam" id="TIGR00461">
    <property type="entry name" value="gcvP"/>
    <property type="match status" value="1"/>
</dbReference>
<dbReference type="PANTHER" id="PTHR11773:SF1">
    <property type="entry name" value="GLYCINE DEHYDROGENASE (DECARBOXYLATING), MITOCHONDRIAL"/>
    <property type="match status" value="1"/>
</dbReference>
<dbReference type="PANTHER" id="PTHR11773">
    <property type="entry name" value="GLYCINE DEHYDROGENASE, DECARBOXYLATING"/>
    <property type="match status" value="1"/>
</dbReference>
<dbReference type="Pfam" id="PF21478">
    <property type="entry name" value="GcvP2_C"/>
    <property type="match status" value="1"/>
</dbReference>
<dbReference type="Pfam" id="PF02347">
    <property type="entry name" value="GDC-P"/>
    <property type="match status" value="2"/>
</dbReference>
<dbReference type="SUPFAM" id="SSF53383">
    <property type="entry name" value="PLP-dependent transferases"/>
    <property type="match status" value="2"/>
</dbReference>
<evidence type="ECO:0000255" key="1">
    <source>
        <dbReference type="HAMAP-Rule" id="MF_00711"/>
    </source>
</evidence>
<proteinExistence type="inferred from homology"/>
<name>GCSP_MYCBP</name>
<feature type="chain" id="PRO_1000045590" description="Glycine dehydrogenase (decarboxylating)">
    <location>
        <begin position="1"/>
        <end position="941"/>
    </location>
</feature>
<feature type="modified residue" description="N6-(pyridoxal phosphate)lysine" evidence="1">
    <location>
        <position position="692"/>
    </location>
</feature>